<evidence type="ECO:0000255" key="1">
    <source>
        <dbReference type="HAMAP-Rule" id="MF_00652"/>
    </source>
</evidence>
<protein>
    <recommendedName>
        <fullName evidence="1">UPF0246 protein Lreu_0493</fullName>
    </recommendedName>
</protein>
<dbReference type="EMBL" id="CP000705">
    <property type="protein sequence ID" value="ABQ82761.1"/>
    <property type="molecule type" value="Genomic_DNA"/>
</dbReference>
<dbReference type="RefSeq" id="WP_011953415.1">
    <property type="nucleotide sequence ID" value="NC_009513.1"/>
</dbReference>
<dbReference type="SMR" id="A5VIT7"/>
<dbReference type="STRING" id="557436.Lreu_0493"/>
<dbReference type="KEGG" id="lre:Lreu_0493"/>
<dbReference type="PATRIC" id="fig|557436.17.peg.1185"/>
<dbReference type="eggNOG" id="COG3022">
    <property type="taxonomic scope" value="Bacteria"/>
</dbReference>
<dbReference type="HOGENOM" id="CLU_061989_1_0_9"/>
<dbReference type="Proteomes" id="UP000001991">
    <property type="component" value="Chromosome"/>
</dbReference>
<dbReference type="GO" id="GO:0005829">
    <property type="term" value="C:cytosol"/>
    <property type="evidence" value="ECO:0007669"/>
    <property type="project" value="TreeGrafter"/>
</dbReference>
<dbReference type="GO" id="GO:0033194">
    <property type="term" value="P:response to hydroperoxide"/>
    <property type="evidence" value="ECO:0007669"/>
    <property type="project" value="TreeGrafter"/>
</dbReference>
<dbReference type="HAMAP" id="MF_00652">
    <property type="entry name" value="UPF0246"/>
    <property type="match status" value="1"/>
</dbReference>
<dbReference type="InterPro" id="IPR005583">
    <property type="entry name" value="YaaA"/>
</dbReference>
<dbReference type="NCBIfam" id="NF002543">
    <property type="entry name" value="PRK02101.1-4"/>
    <property type="match status" value="1"/>
</dbReference>
<dbReference type="PANTHER" id="PTHR30283:SF4">
    <property type="entry name" value="PEROXIDE STRESS RESISTANCE PROTEIN YAAA"/>
    <property type="match status" value="1"/>
</dbReference>
<dbReference type="PANTHER" id="PTHR30283">
    <property type="entry name" value="PEROXIDE STRESS RESPONSE PROTEIN YAAA"/>
    <property type="match status" value="1"/>
</dbReference>
<dbReference type="Pfam" id="PF03883">
    <property type="entry name" value="H2O2_YaaD"/>
    <property type="match status" value="1"/>
</dbReference>
<reference key="1">
    <citation type="journal article" date="2011" name="PLoS Genet.">
        <title>The evolution of host specialization in the vertebrate gut symbiont Lactobacillus reuteri.</title>
        <authorList>
            <person name="Frese S.A."/>
            <person name="Benson A.K."/>
            <person name="Tannock G.W."/>
            <person name="Loach D.M."/>
            <person name="Kim J."/>
            <person name="Zhang M."/>
            <person name="Oh P.L."/>
            <person name="Heng N.C."/>
            <person name="Patil P.B."/>
            <person name="Juge N."/>
            <person name="Mackenzie D.A."/>
            <person name="Pearson B.M."/>
            <person name="Lapidus A."/>
            <person name="Dalin E."/>
            <person name="Tice H."/>
            <person name="Goltsman E."/>
            <person name="Land M."/>
            <person name="Hauser L."/>
            <person name="Ivanova N."/>
            <person name="Kyrpides N.C."/>
            <person name="Walter J."/>
        </authorList>
    </citation>
    <scope>NUCLEOTIDE SEQUENCE [LARGE SCALE GENOMIC DNA]</scope>
    <source>
        <strain>DSM 20016</strain>
    </source>
</reference>
<organism>
    <name type="scientific">Limosilactobacillus reuteri (strain DSM 20016)</name>
    <name type="common">Lactobacillus reuteri</name>
    <dbReference type="NCBI Taxonomy" id="557436"/>
    <lineage>
        <taxon>Bacteria</taxon>
        <taxon>Bacillati</taxon>
        <taxon>Bacillota</taxon>
        <taxon>Bacilli</taxon>
        <taxon>Lactobacillales</taxon>
        <taxon>Lactobacillaceae</taxon>
        <taxon>Limosilactobacillus</taxon>
    </lineage>
</organism>
<gene>
    <name type="ordered locus">Lreu_0493</name>
</gene>
<accession>A5VIT7</accession>
<sequence>MKIIISPARTMQVDTDSLLYKDLPEFLQQTKDILGWMRSLSYDELHKVWGNCSSRLAMKNYQWLQQMDLQRKLTPAIIAFTGLQYQYMAPSVFSEDGLKYVQDNLRILSGFYGILRPFDGIIPYRLGMGDMAPVNGYKNLYDFWGEQLYHELYKNNDLVISLASVEYEKAITPYLQTQDRFIKCIFGEEINGKIKQKATLAKMARGNMVRYLAENQIQTIEGVKQFNIGGYRFREDLSTDEKLVFELVK</sequence>
<name>Y493_LIMRD</name>
<feature type="chain" id="PRO_1000061612" description="UPF0246 protein Lreu_0493">
    <location>
        <begin position="1"/>
        <end position="249"/>
    </location>
</feature>
<comment type="similarity">
    <text evidence="1">Belongs to the UPF0246 family.</text>
</comment>
<proteinExistence type="inferred from homology"/>
<keyword id="KW-1185">Reference proteome</keyword>